<accession>Q91DD9</accession>
<sequence>MRRGVLPTAPPAYNDIAYSMSILPTRPSVIVNETKSDVLAVPGADVPSNSMRPVADDNIDHSSHTPSGVASAFILEAKVNVISGTKVLMKQIPIWLPLGVADQKIYSFDSTTAAIMLASYTVTHFGKISNPLVRVNRLGPGIPDHPLRLLRLGNQAFLQEFVLPPVQLPQYFTFDLTALKLITQPLPAATWTDETPAGAVNALRPGLSLHPKLRPILLPGKIGKKGHASDLTSPDKIQTIMNAIPDLKIVPIDPIKNIVGIEVPELLVQRLTGKKPQPKNGQPIIPVLLPKYVGLDPISPGDLTMVITQDCDSCHSPASHPYHMDKQDSYQ</sequence>
<dbReference type="EMBL" id="AB050936">
    <property type="protein sequence ID" value="BAB69005.1"/>
    <property type="molecule type" value="Genomic_RNA"/>
</dbReference>
<dbReference type="SMR" id="Q91DD9"/>
<dbReference type="Proteomes" id="UP000002322">
    <property type="component" value="Genome"/>
</dbReference>
<dbReference type="GO" id="GO:0033645">
    <property type="term" value="C:host cell endomembrane system"/>
    <property type="evidence" value="ECO:0007669"/>
    <property type="project" value="UniProtKB-SubCell"/>
</dbReference>
<dbReference type="GO" id="GO:0044185">
    <property type="term" value="C:host cell late endosome membrane"/>
    <property type="evidence" value="ECO:0007669"/>
    <property type="project" value="UniProtKB-SubCell"/>
</dbReference>
<dbReference type="GO" id="GO:0020002">
    <property type="term" value="C:host cell plasma membrane"/>
    <property type="evidence" value="ECO:0007669"/>
    <property type="project" value="UniProtKB-SubCell"/>
</dbReference>
<dbReference type="GO" id="GO:0016020">
    <property type="term" value="C:membrane"/>
    <property type="evidence" value="ECO:0007669"/>
    <property type="project" value="UniProtKB-KW"/>
</dbReference>
<dbReference type="GO" id="GO:1990904">
    <property type="term" value="C:ribonucleoprotein complex"/>
    <property type="evidence" value="ECO:0007669"/>
    <property type="project" value="UniProtKB-KW"/>
</dbReference>
<dbReference type="GO" id="GO:0055036">
    <property type="term" value="C:virion membrane"/>
    <property type="evidence" value="ECO:0007669"/>
    <property type="project" value="UniProtKB-SubCell"/>
</dbReference>
<dbReference type="GO" id="GO:0003723">
    <property type="term" value="F:RNA binding"/>
    <property type="evidence" value="ECO:0007669"/>
    <property type="project" value="UniProtKB-KW"/>
</dbReference>
<dbReference type="GO" id="GO:0039660">
    <property type="term" value="F:structural constituent of virion"/>
    <property type="evidence" value="ECO:0007669"/>
    <property type="project" value="UniProtKB-KW"/>
</dbReference>
<dbReference type="GO" id="GO:0052170">
    <property type="term" value="P:symbiont-mediated suppression of host innate immune response"/>
    <property type="evidence" value="ECO:0007669"/>
    <property type="project" value="UniProtKB-KW"/>
</dbReference>
<dbReference type="GO" id="GO:0039702">
    <property type="term" value="P:viral budding via host ESCRT complex"/>
    <property type="evidence" value="ECO:0007669"/>
    <property type="project" value="UniProtKB-KW"/>
</dbReference>
<dbReference type="Gene3D" id="2.60.510.10">
    <property type="entry name" value="EV matrix protein"/>
    <property type="match status" value="1"/>
</dbReference>
<dbReference type="Gene3D" id="2.70.20.20">
    <property type="entry name" value="Matrix protein VP40, N-terminal domain"/>
    <property type="match status" value="1"/>
</dbReference>
<dbReference type="InterPro" id="IPR008986">
    <property type="entry name" value="EV_matrix"/>
</dbReference>
<dbReference type="InterPro" id="IPR035092">
    <property type="entry name" value="EV_matrix_protein_C"/>
</dbReference>
<dbReference type="InterPro" id="IPR043079">
    <property type="entry name" value="EV_matrix_protein_N"/>
</dbReference>
<dbReference type="InterPro" id="IPR038057">
    <property type="entry name" value="EV_matrix_sf"/>
</dbReference>
<dbReference type="Pfam" id="PF07447">
    <property type="entry name" value="Matrix_Filo"/>
    <property type="match status" value="1"/>
</dbReference>
<dbReference type="PIRSF" id="PIRSF018327">
    <property type="entry name" value="VP40_FiloV"/>
    <property type="match status" value="1"/>
</dbReference>
<dbReference type="SUPFAM" id="SSF50012">
    <property type="entry name" value="EV matrix protein"/>
    <property type="match status" value="2"/>
</dbReference>
<organismHost>
    <name type="scientific">Homo sapiens</name>
    <name type="common">Human</name>
    <dbReference type="NCBI Taxonomy" id="9606"/>
</organismHost>
<organismHost>
    <name type="scientific">Macaca fascicularis</name>
    <name type="common">Crab-eating macaque</name>
    <name type="synonym">Cynomolgus monkey</name>
    <dbReference type="NCBI Taxonomy" id="9541"/>
</organismHost>
<organismHost>
    <name type="scientific">Pteropodinae</name>
    <dbReference type="NCBI Taxonomy" id="77225"/>
</organismHost>
<organismHost>
    <name type="scientific">Sus scrofa</name>
    <name type="common">Pig</name>
    <dbReference type="NCBI Taxonomy" id="9823"/>
</organismHost>
<gene>
    <name type="primary">VP40</name>
</gene>
<protein>
    <recommendedName>
        <fullName>Matrix protein VP40</fullName>
    </recommendedName>
    <alternativeName>
        <fullName evidence="3">Ebola VP40</fullName>
        <shortName evidence="3">eVP40</shortName>
    </alternativeName>
    <alternativeName>
        <fullName>Membrane-associated protein VP40</fullName>
    </alternativeName>
</protein>
<organism>
    <name type="scientific">Reston ebolavirus (strain Philippines-96)</name>
    <name type="common">REBOV</name>
    <name type="synonym">Reston Ebola virus</name>
    <dbReference type="NCBI Taxonomy" id="129003"/>
    <lineage>
        <taxon>Viruses</taxon>
        <taxon>Riboviria</taxon>
        <taxon>Orthornavirae</taxon>
        <taxon>Negarnaviricota</taxon>
        <taxon>Haploviricotina</taxon>
        <taxon>Monjiviricetes</taxon>
        <taxon>Mononegavirales</taxon>
        <taxon>Filoviridae</taxon>
        <taxon>Orthoebolavirus</taxon>
        <taxon>Orthoebolavirus restonense</taxon>
        <taxon>Reston ebolavirus</taxon>
    </lineage>
</organism>
<keyword id="KW-1032">Host cell membrane</keyword>
<keyword id="KW-1039">Host endosome</keyword>
<keyword id="KW-1043">Host membrane</keyword>
<keyword id="KW-0945">Host-virus interaction</keyword>
<keyword id="KW-1090">Inhibition of host innate immune response by virus</keyword>
<keyword id="KW-0472">Membrane</keyword>
<keyword id="KW-0687">Ribonucleoprotein</keyword>
<keyword id="KW-0694">RNA-binding</keyword>
<keyword id="KW-0941">Suppressor of RNA silencing</keyword>
<keyword id="KW-1198">Viral budding</keyword>
<keyword id="KW-1187">Viral budding via the host ESCRT complexes</keyword>
<keyword id="KW-0899">Viral immunoevasion</keyword>
<keyword id="KW-0468">Viral matrix protein</keyword>
<keyword id="KW-1188">Viral release from host cell</keyword>
<keyword id="KW-0693">Viral RNA replication</keyword>
<keyword id="KW-0946">Virion</keyword>
<feature type="chain" id="PRO_0000245080" description="Matrix protein VP40">
    <location>
        <begin position="1"/>
        <end position="331"/>
    </location>
</feature>
<feature type="region of interest" description="Important for oligomerization" evidence="1">
    <location>
        <begin position="212"/>
        <end position="214"/>
    </location>
</feature>
<feature type="region of interest" description="Membrane-binding" evidence="1">
    <location>
        <begin position="213"/>
        <end position="326"/>
    </location>
</feature>
<feature type="short sequence motif" description="PTAP/PSAP motif">
    <location>
        <begin position="7"/>
        <end position="10"/>
    </location>
</feature>
<feature type="short sequence motif" description="PPXY motif">
    <location>
        <begin position="10"/>
        <end position="13"/>
    </location>
</feature>
<comment type="function">
    <text evidence="3">Plays an essential role virus particle assembly and budding. Acts by interacting with viral ribonucleocapsid and host members of the ESCRT (endosomal sorting complex required for transport) system such as host VPS4, PDCD6IP/ALIX, NEDD4 or TGS101. The interaction with host E3 ubiquitin ligase SMURF2 also facilitates virus budding. May play a role in immune cell dysfunction by being packaged into exosomes that can decrease the viability of recipient cells (via RNAi suppression and exosome-bystander apoptosis).</text>
</comment>
<comment type="subunit">
    <text evidence="3">Homodimer. Homohexamer. Homooctamer. Exists as a dimer until it reorganizes at the plasma membrane into a hexameric form using phosphatidylinositol 4,5-bisphosphate (PI(4,5)P2). Hexamers are critical for budding. Octamers function in genome replication and RNA binding. Interacts with host TSG101. As a homohexamer, interacts with the WW domain 3 of host NEDD4. Interacts with the nucleoprotein/NP. Interacts (via YPx(n)L/I motif) with host PDCD6IP/ALIX; this interaction supports efficient egress of viral particles. Interacts with VP35. Interacts with host ITCH; this interaction is required for efficient egress. Interacts (via PPXY motif) with host SMURF2 (via WW domains); the interaction positively regulates virus budding.</text>
</comment>
<comment type="subcellular location">
    <subcellularLocation>
        <location evidence="2">Virion membrane</location>
        <topology evidence="2">Peripheral membrane protein</topology>
    </subcellularLocation>
    <subcellularLocation>
        <location evidence="2">Host late endosome membrane</location>
        <topology evidence="2">Peripheral membrane protein</topology>
    </subcellularLocation>
    <subcellularLocation>
        <location evidence="2">Host cell membrane</location>
        <topology evidence="2">Peripheral membrane protein</topology>
        <orientation evidence="2">Cytoplasmic side</orientation>
    </subcellularLocation>
    <subcellularLocation>
        <location evidence="2">Host endomembrane system</location>
        <topology evidence="2">Peripheral membrane protein</topology>
    </subcellularLocation>
    <text evidence="2">In virion, localizes on the intravirional side of the membrane. In the host cell, it is found associated with virus-induced membrane proliferation foci and probably also in multivesicular bodies. These VP40-enriched membrane clusters are then redistributed to the plasma membrane where budding takes place.</text>
</comment>
<comment type="domain">
    <text evidence="3">Late-budding domains (L domains) are short sequence motifs essential for viral particle budding. They recruit proteins of the host ESCRT machinery (Endosomal Sorting Complex Required for Transport) or ESCRT-associated proteins. VP40 contains two overlapping L domains: a PTAP/PSAP motif, which interacts with the UEV domain of TSG101 and a PPXY motif which interacts with the WW domain 3 of NEDD4 E3 ubiquitin ligase and the three WW domains of SMURF2 E3 ubiquitin ligase.</text>
</comment>
<comment type="miscellaneous">
    <text evidence="1">Most abundant protein in the virion.</text>
</comment>
<comment type="similarity">
    <text evidence="4">Belongs to the filoviridae matrix protein VP40 family.</text>
</comment>
<reference key="1">
    <citation type="journal article" date="2001" name="Arch. Virol.">
        <title>Genome structure of Ebola virus subtype Reston: differences among Ebola subtypes.</title>
        <authorList>
            <person name="Ikegami T."/>
            <person name="Calaor A.B."/>
            <person name="Miranda M.E."/>
            <person name="Niikura M."/>
            <person name="Saijo M."/>
            <person name="Kurane I."/>
            <person name="Yoshikawa Y."/>
            <person name="Morikawa S."/>
        </authorList>
    </citation>
    <scope>NUCLEOTIDE SEQUENCE [GENOMIC RNA]</scope>
</reference>
<name>VP40_EBORE</name>
<evidence type="ECO:0000250" key="1"/>
<evidence type="ECO:0000250" key="2">
    <source>
        <dbReference type="UniProtKB" id="P35260"/>
    </source>
</evidence>
<evidence type="ECO:0000250" key="3">
    <source>
        <dbReference type="UniProtKB" id="Q05128"/>
    </source>
</evidence>
<evidence type="ECO:0000305" key="4"/>
<proteinExistence type="inferred from homology"/>